<organism>
    <name type="scientific">Borrelia garinii subsp. bavariensis (strain ATCC BAA-2496 / DSM 23469 / PBi)</name>
    <name type="common">Borreliella bavariensis</name>
    <dbReference type="NCBI Taxonomy" id="290434"/>
    <lineage>
        <taxon>Bacteria</taxon>
        <taxon>Pseudomonadati</taxon>
        <taxon>Spirochaetota</taxon>
        <taxon>Spirochaetia</taxon>
        <taxon>Spirochaetales</taxon>
        <taxon>Borreliaceae</taxon>
        <taxon>Borreliella</taxon>
    </lineage>
</organism>
<protein>
    <recommendedName>
        <fullName evidence="1">DNA-directed RNA polymerase subunit beta</fullName>
        <shortName evidence="1">RNAP subunit beta</shortName>
        <ecNumber evidence="1">2.7.7.6</ecNumber>
    </recommendedName>
    <alternativeName>
        <fullName evidence="1">RNA polymerase subunit beta</fullName>
    </alternativeName>
    <alternativeName>
        <fullName evidence="1">Transcriptase subunit beta</fullName>
    </alternativeName>
</protein>
<keyword id="KW-0240">DNA-directed RNA polymerase</keyword>
<keyword id="KW-0548">Nucleotidyltransferase</keyword>
<keyword id="KW-0804">Transcription</keyword>
<keyword id="KW-0808">Transferase</keyword>
<reference key="1">
    <citation type="journal article" date="2004" name="Nucleic Acids Res.">
        <title>Comparative analysis of the Borrelia garinii genome.</title>
        <authorList>
            <person name="Gloeckner G."/>
            <person name="Lehmann R."/>
            <person name="Romualdi A."/>
            <person name="Pradella S."/>
            <person name="Schulte-Spechtel U."/>
            <person name="Schilhabel M."/>
            <person name="Wilske B."/>
            <person name="Suehnel J."/>
            <person name="Platzer M."/>
        </authorList>
    </citation>
    <scope>NUCLEOTIDE SEQUENCE [LARGE SCALE GENOMIC DNA]</scope>
    <source>
        <strain>ATCC BAA-2496 / DSM 23469 / PBi</strain>
    </source>
</reference>
<sequence length="1155" mass="129675">MIKRVHLGQGRADEILDLPNLIEIQLNSYEKFLQLDKLKNKKPLLNEGLESVFRNIFPIKSGNGDVALEYERYYIENDALNFTEKECKRKGQSYEAVLKVRLNLQFLTTGEIRQKDVYMGTIPLMTERGTFIINGAERVVVSQIHRSPGVVFYKEKDLYSARIIPYRGSWLEFEIDSKKDYLYVKIDRKKRILITLFLRALGFDTREKIIETFYNIKKIKVEDSTKRDLPGQYLAKSINIRENMYYRAGDKITLQDVEDFLQNGVNEIELVDFDGYDAISGKCFVSSNVILNCLEKEDAFFALKDGSKELPKESVMLAVYGALFPGEPISIDNAENDLKTIFFSERRYDLGRVGRYKLSKKFGFDDLSTSVLTMYDIVNTISHLLRIYEGHDILDDIDHLGNRRVRSVGELLTNIYKGAMSRVEKIAKDRMSNKEVFNLKPQELISVKPIVSAVKEFFATSQLSQFMDQVNPLAELTHKRRLNALGPGGLSRDRAGFEVRDVHYTHYGRMCPIETPEGPNIGLIVSLATYSRVNDYGFLETPYRKVVNGEVTDELEYLSAIDEEKKCIAQANAAFNSNGKYLEDLVSVRISGDYTTTNPKNIDYMDVSPRQLISVSSALIPFLEHNDANRALMGSNMQRQAVPLLFPKPPIVGTGMESVVAKDSGVVVKAKRSGEVILATSSKIVVKPFESENAKDLDEYHIVKYERTNQDTCFNQSVLVKEGQKVESGEIIADGPATRYGELALGNNLLLGVIPWNGFNYEDAILISDRIVKEDLYTSIHIKEFSIEVRETKLGPEKVTGDIPNVSEKILNKLDENGIIRIGTYVKPGDILVGKVTPKSEGDITPEFRLLTSIFGEKAKDVKNNSLKVPHGTEGTVIDVQRITKEDVGNLSPGVEEILKVYVAKKRKLKEGDKMAGRHGNKGVVAKILPVEDMPYLADGTPLDICLNPLGVPSRMNIGQLMESQLGLAGKYLGESYNVPVFESATNEQIQEKLKKAGFNPTSKEILYDGYTGEPFENEVMVGVIYMLKLHHLVDDKMHARSTGPYSLVSQQPLGGKAQFGGQRLGEMEVWALEAYGAAHTLQELLTVKSDDMSGRVKIYENIVKGVPTNVSGIPESFNVLMQELRGLGLDLSIYDDNGNQVPLTEKEEELINKG</sequence>
<name>RPOB_BORGP</name>
<dbReference type="EC" id="2.7.7.6" evidence="1"/>
<dbReference type="EMBL" id="CP000013">
    <property type="protein sequence ID" value="AAU07242.1"/>
    <property type="molecule type" value="Genomic_DNA"/>
</dbReference>
<dbReference type="RefSeq" id="WP_011193715.1">
    <property type="nucleotide sequence ID" value="NZ_CP028872.1"/>
</dbReference>
<dbReference type="SMR" id="Q661M9"/>
<dbReference type="GeneID" id="45161177"/>
<dbReference type="KEGG" id="bga:BG0390"/>
<dbReference type="eggNOG" id="COG0085">
    <property type="taxonomic scope" value="Bacteria"/>
</dbReference>
<dbReference type="HOGENOM" id="CLU_000524_4_0_12"/>
<dbReference type="OrthoDB" id="9803954at2"/>
<dbReference type="Proteomes" id="UP000002276">
    <property type="component" value="Chromosome"/>
</dbReference>
<dbReference type="GO" id="GO:0000428">
    <property type="term" value="C:DNA-directed RNA polymerase complex"/>
    <property type="evidence" value="ECO:0007669"/>
    <property type="project" value="UniProtKB-KW"/>
</dbReference>
<dbReference type="GO" id="GO:0003677">
    <property type="term" value="F:DNA binding"/>
    <property type="evidence" value="ECO:0007669"/>
    <property type="project" value="UniProtKB-UniRule"/>
</dbReference>
<dbReference type="GO" id="GO:0003899">
    <property type="term" value="F:DNA-directed RNA polymerase activity"/>
    <property type="evidence" value="ECO:0007669"/>
    <property type="project" value="UniProtKB-UniRule"/>
</dbReference>
<dbReference type="GO" id="GO:0032549">
    <property type="term" value="F:ribonucleoside binding"/>
    <property type="evidence" value="ECO:0007669"/>
    <property type="project" value="InterPro"/>
</dbReference>
<dbReference type="GO" id="GO:0006351">
    <property type="term" value="P:DNA-templated transcription"/>
    <property type="evidence" value="ECO:0007669"/>
    <property type="project" value="UniProtKB-UniRule"/>
</dbReference>
<dbReference type="CDD" id="cd00653">
    <property type="entry name" value="RNA_pol_B_RPB2"/>
    <property type="match status" value="1"/>
</dbReference>
<dbReference type="Gene3D" id="2.40.50.100">
    <property type="match status" value="1"/>
</dbReference>
<dbReference type="Gene3D" id="2.40.50.150">
    <property type="match status" value="1"/>
</dbReference>
<dbReference type="Gene3D" id="3.90.1100.10">
    <property type="match status" value="2"/>
</dbReference>
<dbReference type="Gene3D" id="2.30.150.10">
    <property type="entry name" value="DNA-directed RNA polymerase, beta subunit, external 1 domain"/>
    <property type="match status" value="1"/>
</dbReference>
<dbReference type="Gene3D" id="2.40.270.10">
    <property type="entry name" value="DNA-directed RNA polymerase, subunit 2, domain 6"/>
    <property type="match status" value="2"/>
</dbReference>
<dbReference type="Gene3D" id="3.90.1800.10">
    <property type="entry name" value="RNA polymerase alpha subunit dimerisation domain"/>
    <property type="match status" value="1"/>
</dbReference>
<dbReference type="Gene3D" id="3.90.1110.10">
    <property type="entry name" value="RNA polymerase Rpb2, domain 2"/>
    <property type="match status" value="2"/>
</dbReference>
<dbReference type="HAMAP" id="MF_01321">
    <property type="entry name" value="RNApol_bact_RpoB"/>
    <property type="match status" value="1"/>
</dbReference>
<dbReference type="InterPro" id="IPR042107">
    <property type="entry name" value="DNA-dir_RNA_pol_bsu_ext_1_sf"/>
</dbReference>
<dbReference type="InterPro" id="IPR019462">
    <property type="entry name" value="DNA-dir_RNA_pol_bsu_external_1"/>
</dbReference>
<dbReference type="InterPro" id="IPR015712">
    <property type="entry name" value="DNA-dir_RNA_pol_su2"/>
</dbReference>
<dbReference type="InterPro" id="IPR007120">
    <property type="entry name" value="DNA-dir_RNAP_su2_dom"/>
</dbReference>
<dbReference type="InterPro" id="IPR037033">
    <property type="entry name" value="DNA-dir_RNAP_su2_hyb_sf"/>
</dbReference>
<dbReference type="InterPro" id="IPR010243">
    <property type="entry name" value="RNA_pol_bsu_bac"/>
</dbReference>
<dbReference type="InterPro" id="IPR007121">
    <property type="entry name" value="RNA_pol_bsu_CS"/>
</dbReference>
<dbReference type="InterPro" id="IPR007644">
    <property type="entry name" value="RNA_pol_bsu_protrusion"/>
</dbReference>
<dbReference type="InterPro" id="IPR007642">
    <property type="entry name" value="RNA_pol_Rpb2_2"/>
</dbReference>
<dbReference type="InterPro" id="IPR037034">
    <property type="entry name" value="RNA_pol_Rpb2_2_sf"/>
</dbReference>
<dbReference type="InterPro" id="IPR007645">
    <property type="entry name" value="RNA_pol_Rpb2_3"/>
</dbReference>
<dbReference type="InterPro" id="IPR007641">
    <property type="entry name" value="RNA_pol_Rpb2_7"/>
</dbReference>
<dbReference type="InterPro" id="IPR014724">
    <property type="entry name" value="RNA_pol_RPB2_OB-fold"/>
</dbReference>
<dbReference type="NCBIfam" id="NF001616">
    <property type="entry name" value="PRK00405.1"/>
    <property type="match status" value="1"/>
</dbReference>
<dbReference type="NCBIfam" id="TIGR02013">
    <property type="entry name" value="rpoB"/>
    <property type="match status" value="1"/>
</dbReference>
<dbReference type="PANTHER" id="PTHR20856">
    <property type="entry name" value="DNA-DIRECTED RNA POLYMERASE I SUBUNIT 2"/>
    <property type="match status" value="1"/>
</dbReference>
<dbReference type="Pfam" id="PF04563">
    <property type="entry name" value="RNA_pol_Rpb2_1"/>
    <property type="match status" value="1"/>
</dbReference>
<dbReference type="Pfam" id="PF04561">
    <property type="entry name" value="RNA_pol_Rpb2_2"/>
    <property type="match status" value="2"/>
</dbReference>
<dbReference type="Pfam" id="PF04565">
    <property type="entry name" value="RNA_pol_Rpb2_3"/>
    <property type="match status" value="1"/>
</dbReference>
<dbReference type="Pfam" id="PF10385">
    <property type="entry name" value="RNA_pol_Rpb2_45"/>
    <property type="match status" value="1"/>
</dbReference>
<dbReference type="Pfam" id="PF00562">
    <property type="entry name" value="RNA_pol_Rpb2_6"/>
    <property type="match status" value="1"/>
</dbReference>
<dbReference type="Pfam" id="PF04560">
    <property type="entry name" value="RNA_pol_Rpb2_7"/>
    <property type="match status" value="1"/>
</dbReference>
<dbReference type="SUPFAM" id="SSF64484">
    <property type="entry name" value="beta and beta-prime subunits of DNA dependent RNA-polymerase"/>
    <property type="match status" value="1"/>
</dbReference>
<dbReference type="PROSITE" id="PS01166">
    <property type="entry name" value="RNA_POL_BETA"/>
    <property type="match status" value="1"/>
</dbReference>
<comment type="function">
    <text evidence="1">DNA-dependent RNA polymerase catalyzes the transcription of DNA into RNA using the four ribonucleoside triphosphates as substrates.</text>
</comment>
<comment type="catalytic activity">
    <reaction evidence="1">
        <text>RNA(n) + a ribonucleoside 5'-triphosphate = RNA(n+1) + diphosphate</text>
        <dbReference type="Rhea" id="RHEA:21248"/>
        <dbReference type="Rhea" id="RHEA-COMP:14527"/>
        <dbReference type="Rhea" id="RHEA-COMP:17342"/>
        <dbReference type="ChEBI" id="CHEBI:33019"/>
        <dbReference type="ChEBI" id="CHEBI:61557"/>
        <dbReference type="ChEBI" id="CHEBI:140395"/>
        <dbReference type="EC" id="2.7.7.6"/>
    </reaction>
</comment>
<comment type="subunit">
    <text evidence="1">The RNAP catalytic core consists of 2 alpha, 1 beta, 1 beta' and 1 omega subunit. When a sigma factor is associated with the core the holoenzyme is formed, which can initiate transcription.</text>
</comment>
<comment type="similarity">
    <text evidence="1">Belongs to the RNA polymerase beta chain family.</text>
</comment>
<gene>
    <name evidence="1" type="primary">rpoB</name>
    <name type="ordered locus">BG0390</name>
</gene>
<evidence type="ECO:0000255" key="1">
    <source>
        <dbReference type="HAMAP-Rule" id="MF_01321"/>
    </source>
</evidence>
<proteinExistence type="inferred from homology"/>
<accession>Q661M9</accession>
<feature type="chain" id="PRO_0000224034" description="DNA-directed RNA polymerase subunit beta">
    <location>
        <begin position="1"/>
        <end position="1155"/>
    </location>
</feature>